<gene>
    <name evidence="1" type="primary">queA</name>
    <name type="ordered locus">BB1363</name>
</gene>
<feature type="chain" id="PRO_0000165381" description="S-adenosylmethionine:tRNA ribosyltransferase-isomerase">
    <location>
        <begin position="1"/>
        <end position="347"/>
    </location>
</feature>
<proteinExistence type="inferred from homology"/>
<sequence length="347" mass="37652">MPTPLTLADFDYHLPPELIAQSPAAERGGSRLLHLDAASRLHDRRFPDLAGLLRPHDLLVFNDTRVIKARLTGQKATGGKVEVLVERITAPDRALVHVRASKSPGPGMRLRLAEAFEAEVLGREGELFDLRFPAPVLDLLDAHGATPLPPYITHAADATDERRYQTVYAREPGAVAAPTAGLHFDQPMLEQLAAQGVQRAFVTLHVGAGTFQPVRVQNLAEHIMHAEWYTVPEATVAAIARARAHGGRIVAVGTTSVRALESAAAQAQDGPLAAAQGDTRLFITPGYRYRIVDALLTNFHLPQSTLLMLVSALAGVAPIRRAYAHAVAERYRFFSYGDAMFIETPAP</sequence>
<keyword id="KW-0963">Cytoplasm</keyword>
<keyword id="KW-0671">Queuosine biosynthesis</keyword>
<keyword id="KW-0949">S-adenosyl-L-methionine</keyword>
<keyword id="KW-0808">Transferase</keyword>
<dbReference type="EC" id="2.4.99.17" evidence="1"/>
<dbReference type="EMBL" id="BX640441">
    <property type="protein sequence ID" value="CAE31861.1"/>
    <property type="status" value="ALT_INIT"/>
    <property type="molecule type" value="Genomic_DNA"/>
</dbReference>
<dbReference type="SMR" id="Q7WMM7"/>
<dbReference type="KEGG" id="bbr:BB1363"/>
<dbReference type="eggNOG" id="COG0809">
    <property type="taxonomic scope" value="Bacteria"/>
</dbReference>
<dbReference type="HOGENOM" id="CLU_039110_1_0_4"/>
<dbReference type="UniPathway" id="UPA00392"/>
<dbReference type="Proteomes" id="UP000001027">
    <property type="component" value="Chromosome"/>
</dbReference>
<dbReference type="GO" id="GO:0005737">
    <property type="term" value="C:cytoplasm"/>
    <property type="evidence" value="ECO:0007669"/>
    <property type="project" value="UniProtKB-SubCell"/>
</dbReference>
<dbReference type="GO" id="GO:0051075">
    <property type="term" value="F:S-adenosylmethionine:tRNA ribosyltransferase-isomerase activity"/>
    <property type="evidence" value="ECO:0007669"/>
    <property type="project" value="UniProtKB-EC"/>
</dbReference>
<dbReference type="GO" id="GO:0008616">
    <property type="term" value="P:queuosine biosynthetic process"/>
    <property type="evidence" value="ECO:0007669"/>
    <property type="project" value="UniProtKB-UniRule"/>
</dbReference>
<dbReference type="GO" id="GO:0002099">
    <property type="term" value="P:tRNA wobble guanine modification"/>
    <property type="evidence" value="ECO:0007669"/>
    <property type="project" value="TreeGrafter"/>
</dbReference>
<dbReference type="FunFam" id="3.40.1780.10:FF:000001">
    <property type="entry name" value="S-adenosylmethionine:tRNA ribosyltransferase-isomerase"/>
    <property type="match status" value="1"/>
</dbReference>
<dbReference type="Gene3D" id="2.40.10.240">
    <property type="entry name" value="QueA-like"/>
    <property type="match status" value="1"/>
</dbReference>
<dbReference type="Gene3D" id="3.40.1780.10">
    <property type="entry name" value="QueA-like"/>
    <property type="match status" value="1"/>
</dbReference>
<dbReference type="HAMAP" id="MF_00113">
    <property type="entry name" value="QueA"/>
    <property type="match status" value="1"/>
</dbReference>
<dbReference type="InterPro" id="IPR003699">
    <property type="entry name" value="QueA"/>
</dbReference>
<dbReference type="InterPro" id="IPR042118">
    <property type="entry name" value="QueA_dom1"/>
</dbReference>
<dbReference type="InterPro" id="IPR042119">
    <property type="entry name" value="QueA_dom2"/>
</dbReference>
<dbReference type="InterPro" id="IPR036100">
    <property type="entry name" value="QueA_sf"/>
</dbReference>
<dbReference type="NCBIfam" id="NF001140">
    <property type="entry name" value="PRK00147.1"/>
    <property type="match status" value="1"/>
</dbReference>
<dbReference type="NCBIfam" id="TIGR00113">
    <property type="entry name" value="queA"/>
    <property type="match status" value="1"/>
</dbReference>
<dbReference type="PANTHER" id="PTHR30307">
    <property type="entry name" value="S-ADENOSYLMETHIONINE:TRNA RIBOSYLTRANSFERASE-ISOMERASE"/>
    <property type="match status" value="1"/>
</dbReference>
<dbReference type="PANTHER" id="PTHR30307:SF0">
    <property type="entry name" value="S-ADENOSYLMETHIONINE:TRNA RIBOSYLTRANSFERASE-ISOMERASE"/>
    <property type="match status" value="1"/>
</dbReference>
<dbReference type="Pfam" id="PF02547">
    <property type="entry name" value="Queuosine_synth"/>
    <property type="match status" value="1"/>
</dbReference>
<dbReference type="SUPFAM" id="SSF111337">
    <property type="entry name" value="QueA-like"/>
    <property type="match status" value="1"/>
</dbReference>
<accession>Q7WMM7</accession>
<protein>
    <recommendedName>
        <fullName evidence="1">S-adenosylmethionine:tRNA ribosyltransferase-isomerase</fullName>
        <ecNumber evidence="1">2.4.99.17</ecNumber>
    </recommendedName>
    <alternativeName>
        <fullName evidence="1">Queuosine biosynthesis protein QueA</fullName>
    </alternativeName>
</protein>
<name>QUEA_BORBR</name>
<organism>
    <name type="scientific">Bordetella bronchiseptica (strain ATCC BAA-588 / NCTC 13252 / RB50)</name>
    <name type="common">Alcaligenes bronchisepticus</name>
    <dbReference type="NCBI Taxonomy" id="257310"/>
    <lineage>
        <taxon>Bacteria</taxon>
        <taxon>Pseudomonadati</taxon>
        <taxon>Pseudomonadota</taxon>
        <taxon>Betaproteobacteria</taxon>
        <taxon>Burkholderiales</taxon>
        <taxon>Alcaligenaceae</taxon>
        <taxon>Bordetella</taxon>
    </lineage>
</organism>
<reference key="1">
    <citation type="journal article" date="2003" name="Nat. Genet.">
        <title>Comparative analysis of the genome sequences of Bordetella pertussis, Bordetella parapertussis and Bordetella bronchiseptica.</title>
        <authorList>
            <person name="Parkhill J."/>
            <person name="Sebaihia M."/>
            <person name="Preston A."/>
            <person name="Murphy L.D."/>
            <person name="Thomson N.R."/>
            <person name="Harris D.E."/>
            <person name="Holden M.T.G."/>
            <person name="Churcher C.M."/>
            <person name="Bentley S.D."/>
            <person name="Mungall K.L."/>
            <person name="Cerdeno-Tarraga A.-M."/>
            <person name="Temple L."/>
            <person name="James K.D."/>
            <person name="Harris B."/>
            <person name="Quail M.A."/>
            <person name="Achtman M."/>
            <person name="Atkin R."/>
            <person name="Baker S."/>
            <person name="Basham D."/>
            <person name="Bason N."/>
            <person name="Cherevach I."/>
            <person name="Chillingworth T."/>
            <person name="Collins M."/>
            <person name="Cronin A."/>
            <person name="Davis P."/>
            <person name="Doggett J."/>
            <person name="Feltwell T."/>
            <person name="Goble A."/>
            <person name="Hamlin N."/>
            <person name="Hauser H."/>
            <person name="Holroyd S."/>
            <person name="Jagels K."/>
            <person name="Leather S."/>
            <person name="Moule S."/>
            <person name="Norberczak H."/>
            <person name="O'Neil S."/>
            <person name="Ormond D."/>
            <person name="Price C."/>
            <person name="Rabbinowitsch E."/>
            <person name="Rutter S."/>
            <person name="Sanders M."/>
            <person name="Saunders D."/>
            <person name="Seeger K."/>
            <person name="Sharp S."/>
            <person name="Simmonds M."/>
            <person name="Skelton J."/>
            <person name="Squares R."/>
            <person name="Squares S."/>
            <person name="Stevens K."/>
            <person name="Unwin L."/>
            <person name="Whitehead S."/>
            <person name="Barrell B.G."/>
            <person name="Maskell D.J."/>
        </authorList>
    </citation>
    <scope>NUCLEOTIDE SEQUENCE [LARGE SCALE GENOMIC DNA]</scope>
    <source>
        <strain>ATCC BAA-588 / NCTC 13252 / RB50</strain>
    </source>
</reference>
<evidence type="ECO:0000255" key="1">
    <source>
        <dbReference type="HAMAP-Rule" id="MF_00113"/>
    </source>
</evidence>
<evidence type="ECO:0000305" key="2"/>
<comment type="function">
    <text evidence="1">Transfers and isomerizes the ribose moiety from AdoMet to the 7-aminomethyl group of 7-deazaguanine (preQ1-tRNA) to give epoxyqueuosine (oQ-tRNA).</text>
</comment>
<comment type="catalytic activity">
    <reaction evidence="1">
        <text>7-aminomethyl-7-carbaguanosine(34) in tRNA + S-adenosyl-L-methionine = epoxyqueuosine(34) in tRNA + adenine + L-methionine + 2 H(+)</text>
        <dbReference type="Rhea" id="RHEA:32155"/>
        <dbReference type="Rhea" id="RHEA-COMP:10342"/>
        <dbReference type="Rhea" id="RHEA-COMP:18582"/>
        <dbReference type="ChEBI" id="CHEBI:15378"/>
        <dbReference type="ChEBI" id="CHEBI:16708"/>
        <dbReference type="ChEBI" id="CHEBI:57844"/>
        <dbReference type="ChEBI" id="CHEBI:59789"/>
        <dbReference type="ChEBI" id="CHEBI:82833"/>
        <dbReference type="ChEBI" id="CHEBI:194443"/>
        <dbReference type="EC" id="2.4.99.17"/>
    </reaction>
</comment>
<comment type="pathway">
    <text evidence="1">tRNA modification; tRNA-queuosine biosynthesis.</text>
</comment>
<comment type="subunit">
    <text evidence="1">Monomer.</text>
</comment>
<comment type="subcellular location">
    <subcellularLocation>
        <location evidence="1">Cytoplasm</location>
    </subcellularLocation>
</comment>
<comment type="similarity">
    <text evidence="1">Belongs to the QueA family.</text>
</comment>
<comment type="sequence caution" evidence="2">
    <conflict type="erroneous initiation">
        <sequence resource="EMBL-CDS" id="CAE31861"/>
    </conflict>
</comment>